<proteinExistence type="evidence at protein level"/>
<sequence>MNEKKQSRLRRAKSTRLHIRALGATRLCVNRTPRHIYAQVISADGGKVLAQASTLDASLRSGTTGNIEAATKVGALIAERAKAAGVTKVAFDRSGFKYHGRIKALADAAREGGLEF</sequence>
<evidence type="ECO:0000255" key="1">
    <source>
        <dbReference type="HAMAP-Rule" id="MF_01337"/>
    </source>
</evidence>
<evidence type="ECO:0000305" key="2"/>
<evidence type="ECO:0007829" key="3">
    <source>
        <dbReference type="PDB" id="7M4V"/>
    </source>
</evidence>
<accession>B7IA23</accession>
<comment type="function">
    <text evidence="1">This is one of the proteins that bind and probably mediate the attachment of the 5S RNA into the large ribosomal subunit, where it forms part of the central protuberance.</text>
</comment>
<comment type="subunit">
    <text evidence="1">Part of the 50S ribosomal subunit; part of the 5S rRNA/L5/L18/L25 subcomplex. Contacts the 5S and 23S rRNAs.</text>
</comment>
<comment type="similarity">
    <text evidence="1">Belongs to the universal ribosomal protein uL18 family.</text>
</comment>
<reference key="1">
    <citation type="journal article" date="2008" name="J. Bacteriol.">
        <title>Comparative genome sequence analysis of multidrug-resistant Acinetobacter baumannii.</title>
        <authorList>
            <person name="Adams M.D."/>
            <person name="Goglin K."/>
            <person name="Molyneaux N."/>
            <person name="Hujer K.M."/>
            <person name="Lavender H."/>
            <person name="Jamison J.J."/>
            <person name="MacDonald I.J."/>
            <person name="Martin K.M."/>
            <person name="Russo T."/>
            <person name="Campagnari A.A."/>
            <person name="Hujer A.M."/>
            <person name="Bonomo R.A."/>
            <person name="Gill S.R."/>
        </authorList>
    </citation>
    <scope>NUCLEOTIDE SEQUENCE [LARGE SCALE GENOMIC DNA]</scope>
    <source>
        <strain>AB0057</strain>
    </source>
</reference>
<protein>
    <recommendedName>
        <fullName evidence="1">Large ribosomal subunit protein uL18</fullName>
    </recommendedName>
    <alternativeName>
        <fullName evidence="2">50S ribosomal protein L18</fullName>
    </alternativeName>
</protein>
<name>RL18_ACIB5</name>
<feature type="chain" id="PRO_1000142605" description="Large ribosomal subunit protein uL18">
    <location>
        <begin position="1"/>
        <end position="116"/>
    </location>
</feature>
<feature type="helix" evidence="3">
    <location>
        <begin position="4"/>
        <end position="22"/>
    </location>
</feature>
<feature type="strand" evidence="3">
    <location>
        <begin position="26"/>
        <end position="31"/>
    </location>
</feature>
<feature type="strand" evidence="3">
    <location>
        <begin position="36"/>
        <end position="41"/>
    </location>
</feature>
<feature type="strand" evidence="3">
    <location>
        <begin position="43"/>
        <end position="53"/>
    </location>
</feature>
<feature type="helix" evidence="3">
    <location>
        <begin position="57"/>
        <end position="60"/>
    </location>
</feature>
<feature type="strand" evidence="3">
    <location>
        <begin position="64"/>
        <end position="66"/>
    </location>
</feature>
<feature type="helix" evidence="3">
    <location>
        <begin position="67"/>
        <end position="84"/>
    </location>
</feature>
<feature type="strand" evidence="3">
    <location>
        <begin position="90"/>
        <end position="92"/>
    </location>
</feature>
<feature type="helix" evidence="3">
    <location>
        <begin position="101"/>
        <end position="112"/>
    </location>
</feature>
<gene>
    <name evidence="1" type="primary">rplR</name>
    <name type="ordered locus">AB57_3514</name>
</gene>
<organism>
    <name type="scientific">Acinetobacter baumannii (strain AB0057)</name>
    <dbReference type="NCBI Taxonomy" id="480119"/>
    <lineage>
        <taxon>Bacteria</taxon>
        <taxon>Pseudomonadati</taxon>
        <taxon>Pseudomonadota</taxon>
        <taxon>Gammaproteobacteria</taxon>
        <taxon>Moraxellales</taxon>
        <taxon>Moraxellaceae</taxon>
        <taxon>Acinetobacter</taxon>
        <taxon>Acinetobacter calcoaceticus/baumannii complex</taxon>
    </lineage>
</organism>
<keyword id="KW-0002">3D-structure</keyword>
<keyword id="KW-0687">Ribonucleoprotein</keyword>
<keyword id="KW-0689">Ribosomal protein</keyword>
<keyword id="KW-0694">RNA-binding</keyword>
<keyword id="KW-0699">rRNA-binding</keyword>
<dbReference type="EMBL" id="CP001182">
    <property type="protein sequence ID" value="ACJ42881.1"/>
    <property type="molecule type" value="Genomic_DNA"/>
</dbReference>
<dbReference type="RefSeq" id="WP_001003194.1">
    <property type="nucleotide sequence ID" value="NC_011586.2"/>
</dbReference>
<dbReference type="PDB" id="6V39">
    <property type="method" value="EM"/>
    <property type="resolution" value="3.04 A"/>
    <property type="chains" value="N=1-116"/>
</dbReference>
<dbReference type="PDB" id="6V3A">
    <property type="method" value="EM"/>
    <property type="resolution" value="2.82 A"/>
    <property type="chains" value="N=1-116"/>
</dbReference>
<dbReference type="PDB" id="6V3B">
    <property type="method" value="EM"/>
    <property type="resolution" value="2.91 A"/>
    <property type="chains" value="N=1-116"/>
</dbReference>
<dbReference type="PDB" id="6V3D">
    <property type="method" value="EM"/>
    <property type="resolution" value="2.95 A"/>
    <property type="chains" value="N=1-116"/>
</dbReference>
<dbReference type="PDB" id="7M4V">
    <property type="method" value="EM"/>
    <property type="resolution" value="2.54 A"/>
    <property type="chains" value="N=1-116"/>
</dbReference>
<dbReference type="PDB" id="7M4W">
    <property type="method" value="EM"/>
    <property type="resolution" value="2.55 A"/>
    <property type="chains" value="N=1-116"/>
</dbReference>
<dbReference type="PDB" id="7M4X">
    <property type="method" value="EM"/>
    <property type="resolution" value="2.66 A"/>
    <property type="chains" value="N=1-116"/>
</dbReference>
<dbReference type="PDB" id="7M4Y">
    <property type="method" value="EM"/>
    <property type="resolution" value="2.50 A"/>
    <property type="chains" value="N=1-116"/>
</dbReference>
<dbReference type="PDB" id="7M4Z">
    <property type="method" value="EM"/>
    <property type="resolution" value="2.92 A"/>
    <property type="chains" value="N=1-116"/>
</dbReference>
<dbReference type="PDB" id="7RYF">
    <property type="method" value="EM"/>
    <property type="resolution" value="2.65 A"/>
    <property type="chains" value="N=1-116"/>
</dbReference>
<dbReference type="PDB" id="7RYG">
    <property type="method" value="EM"/>
    <property type="resolution" value="2.38 A"/>
    <property type="chains" value="N=1-116"/>
</dbReference>
<dbReference type="PDB" id="7RYH">
    <property type="method" value="EM"/>
    <property type="resolution" value="2.43 A"/>
    <property type="chains" value="N=1-116"/>
</dbReference>
<dbReference type="PDB" id="7UVV">
    <property type="method" value="EM"/>
    <property type="resolution" value="2.50 A"/>
    <property type="chains" value="N=1-116"/>
</dbReference>
<dbReference type="PDB" id="7UVW">
    <property type="method" value="EM"/>
    <property type="resolution" value="2.37 A"/>
    <property type="chains" value="N=1-116"/>
</dbReference>
<dbReference type="PDB" id="7UVX">
    <property type="method" value="EM"/>
    <property type="resolution" value="2.35 A"/>
    <property type="chains" value="N=1-116"/>
</dbReference>
<dbReference type="PDB" id="7UVY">
    <property type="method" value="EM"/>
    <property type="resolution" value="2.39 A"/>
    <property type="chains" value="N=1-116"/>
</dbReference>
<dbReference type="PDB" id="7UVZ">
    <property type="method" value="EM"/>
    <property type="resolution" value="2.21 A"/>
    <property type="chains" value="N=1-116"/>
</dbReference>
<dbReference type="PDB" id="7UW1">
    <property type="method" value="EM"/>
    <property type="resolution" value="2.21 A"/>
    <property type="chains" value="N=1-116"/>
</dbReference>
<dbReference type="PDBsum" id="6V39"/>
<dbReference type="PDBsum" id="6V3A"/>
<dbReference type="PDBsum" id="6V3B"/>
<dbReference type="PDBsum" id="6V3D"/>
<dbReference type="PDBsum" id="7M4V"/>
<dbReference type="PDBsum" id="7M4W"/>
<dbReference type="PDBsum" id="7M4X"/>
<dbReference type="PDBsum" id="7M4Y"/>
<dbReference type="PDBsum" id="7M4Z"/>
<dbReference type="PDBsum" id="7RYF"/>
<dbReference type="PDBsum" id="7RYG"/>
<dbReference type="PDBsum" id="7RYH"/>
<dbReference type="PDBsum" id="7UVV"/>
<dbReference type="PDBsum" id="7UVW"/>
<dbReference type="PDBsum" id="7UVX"/>
<dbReference type="PDBsum" id="7UVY"/>
<dbReference type="PDBsum" id="7UVZ"/>
<dbReference type="PDBsum" id="7UW1"/>
<dbReference type="EMDB" id="EMD-21030"/>
<dbReference type="EMDB" id="EMD-21031"/>
<dbReference type="EMDB" id="EMD-21032"/>
<dbReference type="EMDB" id="EMD-21033"/>
<dbReference type="EMDB" id="EMD-23667"/>
<dbReference type="EMDB" id="EMD-23668"/>
<dbReference type="EMDB" id="EMD-23669"/>
<dbReference type="EMDB" id="EMD-23670"/>
<dbReference type="EMDB" id="EMD-23671"/>
<dbReference type="EMDB" id="EMD-24738"/>
<dbReference type="EMDB" id="EMD-24739"/>
<dbReference type="EMDB" id="EMD-24740"/>
<dbReference type="EMDB" id="EMD-26817"/>
<dbReference type="EMDB" id="EMD-26818"/>
<dbReference type="EMDB" id="EMD-26819"/>
<dbReference type="EMDB" id="EMD-26820"/>
<dbReference type="EMDB" id="EMD-26821"/>
<dbReference type="EMDB" id="EMD-26822"/>
<dbReference type="SMR" id="B7IA23"/>
<dbReference type="IntAct" id="B7IA23">
    <property type="interactions" value="2"/>
</dbReference>
<dbReference type="GeneID" id="92895301"/>
<dbReference type="KEGG" id="abn:AB57_3514"/>
<dbReference type="HOGENOM" id="CLU_098841_0_1_6"/>
<dbReference type="Proteomes" id="UP000007094">
    <property type="component" value="Chromosome"/>
</dbReference>
<dbReference type="GO" id="GO:0022625">
    <property type="term" value="C:cytosolic large ribosomal subunit"/>
    <property type="evidence" value="ECO:0007669"/>
    <property type="project" value="TreeGrafter"/>
</dbReference>
<dbReference type="GO" id="GO:0008097">
    <property type="term" value="F:5S rRNA binding"/>
    <property type="evidence" value="ECO:0007669"/>
    <property type="project" value="TreeGrafter"/>
</dbReference>
<dbReference type="GO" id="GO:0003735">
    <property type="term" value="F:structural constituent of ribosome"/>
    <property type="evidence" value="ECO:0007669"/>
    <property type="project" value="InterPro"/>
</dbReference>
<dbReference type="GO" id="GO:0006412">
    <property type="term" value="P:translation"/>
    <property type="evidence" value="ECO:0007669"/>
    <property type="project" value="UniProtKB-UniRule"/>
</dbReference>
<dbReference type="CDD" id="cd00432">
    <property type="entry name" value="Ribosomal_L18_L5e"/>
    <property type="match status" value="1"/>
</dbReference>
<dbReference type="FunFam" id="3.30.420.100:FF:000001">
    <property type="entry name" value="50S ribosomal protein L18"/>
    <property type="match status" value="1"/>
</dbReference>
<dbReference type="Gene3D" id="3.30.420.100">
    <property type="match status" value="1"/>
</dbReference>
<dbReference type="HAMAP" id="MF_01337_B">
    <property type="entry name" value="Ribosomal_uL18_B"/>
    <property type="match status" value="1"/>
</dbReference>
<dbReference type="InterPro" id="IPR004389">
    <property type="entry name" value="Ribosomal_uL18_bac-type"/>
</dbReference>
<dbReference type="InterPro" id="IPR005484">
    <property type="entry name" value="Ribosomal_uL18_bac/euk"/>
</dbReference>
<dbReference type="NCBIfam" id="TIGR00060">
    <property type="entry name" value="L18_bact"/>
    <property type="match status" value="1"/>
</dbReference>
<dbReference type="PANTHER" id="PTHR12899">
    <property type="entry name" value="39S RIBOSOMAL PROTEIN L18, MITOCHONDRIAL"/>
    <property type="match status" value="1"/>
</dbReference>
<dbReference type="PANTHER" id="PTHR12899:SF3">
    <property type="entry name" value="LARGE RIBOSOMAL SUBUNIT PROTEIN UL18M"/>
    <property type="match status" value="1"/>
</dbReference>
<dbReference type="Pfam" id="PF00861">
    <property type="entry name" value="Ribosomal_L18p"/>
    <property type="match status" value="1"/>
</dbReference>
<dbReference type="SUPFAM" id="SSF53137">
    <property type="entry name" value="Translational machinery components"/>
    <property type="match status" value="1"/>
</dbReference>